<name>P4H_RHIME</name>
<protein>
    <recommendedName>
        <fullName>L-proline cis-4-hydroxylase</fullName>
        <shortName>P4H</shortName>
        <ecNumber evidence="3">1.14.11.56</ecNumber>
    </recommendedName>
</protein>
<reference key="1">
    <citation type="journal article" date="2001" name="Proc. Natl. Acad. Sci. U.S.A.">
        <title>Analysis of the chromosome sequence of the legume symbiont Sinorhizobium meliloti strain 1021.</title>
        <authorList>
            <person name="Capela D."/>
            <person name="Barloy-Hubler F."/>
            <person name="Gouzy J."/>
            <person name="Bothe G."/>
            <person name="Ampe F."/>
            <person name="Batut J."/>
            <person name="Boistard P."/>
            <person name="Becker A."/>
            <person name="Boutry M."/>
            <person name="Cadieu E."/>
            <person name="Dreano S."/>
            <person name="Gloux S."/>
            <person name="Godrie T."/>
            <person name="Goffeau A."/>
            <person name="Kahn D."/>
            <person name="Kiss E."/>
            <person name="Lelaure V."/>
            <person name="Masuy D."/>
            <person name="Pohl T."/>
            <person name="Portetelle D."/>
            <person name="Puehler A."/>
            <person name="Purnelle B."/>
            <person name="Ramsperger U."/>
            <person name="Renard C."/>
            <person name="Thebault P."/>
            <person name="Vandenbol M."/>
            <person name="Weidner S."/>
            <person name="Galibert F."/>
        </authorList>
    </citation>
    <scope>NUCLEOTIDE SEQUENCE [LARGE SCALE GENOMIC DNA]</scope>
    <source>
        <strain>1021</strain>
    </source>
</reference>
<reference key="2">
    <citation type="journal article" date="2001" name="Science">
        <title>The composite genome of the legume symbiont Sinorhizobium meliloti.</title>
        <authorList>
            <person name="Galibert F."/>
            <person name="Finan T.M."/>
            <person name="Long S.R."/>
            <person name="Puehler A."/>
            <person name="Abola P."/>
            <person name="Ampe F."/>
            <person name="Barloy-Hubler F."/>
            <person name="Barnett M.J."/>
            <person name="Becker A."/>
            <person name="Boistard P."/>
            <person name="Bothe G."/>
            <person name="Boutry M."/>
            <person name="Bowser L."/>
            <person name="Buhrmester J."/>
            <person name="Cadieu E."/>
            <person name="Capela D."/>
            <person name="Chain P."/>
            <person name="Cowie A."/>
            <person name="Davis R.W."/>
            <person name="Dreano S."/>
            <person name="Federspiel N.A."/>
            <person name="Fisher R.F."/>
            <person name="Gloux S."/>
            <person name="Godrie T."/>
            <person name="Goffeau A."/>
            <person name="Golding B."/>
            <person name="Gouzy J."/>
            <person name="Gurjal M."/>
            <person name="Hernandez-Lucas I."/>
            <person name="Hong A."/>
            <person name="Huizar L."/>
            <person name="Hyman R.W."/>
            <person name="Jones T."/>
            <person name="Kahn D."/>
            <person name="Kahn M.L."/>
            <person name="Kalman S."/>
            <person name="Keating D.H."/>
            <person name="Kiss E."/>
            <person name="Komp C."/>
            <person name="Lelaure V."/>
            <person name="Masuy D."/>
            <person name="Palm C."/>
            <person name="Peck M.C."/>
            <person name="Pohl T.M."/>
            <person name="Portetelle D."/>
            <person name="Purnelle B."/>
            <person name="Ramsperger U."/>
            <person name="Surzycki R."/>
            <person name="Thebault P."/>
            <person name="Vandenbol M."/>
            <person name="Vorhoelter F.J."/>
            <person name="Weidner S."/>
            <person name="Wells D.H."/>
            <person name="Wong K."/>
            <person name="Yeh K.-C."/>
            <person name="Batut J."/>
        </authorList>
    </citation>
    <scope>NUCLEOTIDE SEQUENCE [LARGE SCALE GENOMIC DNA]</scope>
    <source>
        <strain>1021</strain>
    </source>
</reference>
<reference key="3">
    <citation type="journal article" date="2009" name="Biochem. Biophys. Res. Commun.">
        <title>Characterization of novel 2-oxoglutarate dependent dioxygenases converting L-proline to cis-4-hydroxy-l-proline.</title>
        <authorList>
            <person name="Hara R."/>
            <person name="Kino K."/>
        </authorList>
    </citation>
    <scope>FUNCTION</scope>
    <scope>CATALYTIC ACTIVITY</scope>
    <scope>COFACTOR</scope>
    <scope>ACTIVITY REGULATION</scope>
    <scope>BIOPHYSICOCHEMICAL PROPERTIES</scope>
    <scope>BIOTECHNOLOGY</scope>
    <source>
        <strain>MAFF303099</strain>
    </source>
</reference>
<dbReference type="EC" id="1.14.11.56" evidence="3"/>
<dbReference type="EMBL" id="AL591688">
    <property type="protein sequence ID" value="CAC47686.1"/>
    <property type="molecule type" value="Genomic_DNA"/>
</dbReference>
<dbReference type="RefSeq" id="NP_387213.1">
    <property type="nucleotide sequence ID" value="NC_003047.1"/>
</dbReference>
<dbReference type="RefSeq" id="WP_010970414.1">
    <property type="nucleotide sequence ID" value="NC_003047.1"/>
</dbReference>
<dbReference type="SMR" id="Q92LF6"/>
<dbReference type="EnsemblBacteria" id="CAC47686">
    <property type="protein sequence ID" value="CAC47686"/>
    <property type="gene ID" value="SMc03253"/>
</dbReference>
<dbReference type="KEGG" id="sme:SMc03253"/>
<dbReference type="PATRIC" id="fig|266834.11.peg.4644"/>
<dbReference type="eggNOG" id="COG3555">
    <property type="taxonomic scope" value="Bacteria"/>
</dbReference>
<dbReference type="HOGENOM" id="CLU_962849_0_0_5"/>
<dbReference type="OrthoDB" id="1441538at2"/>
<dbReference type="BRENDA" id="1.14.11.56">
    <property type="organism ID" value="3243"/>
</dbReference>
<dbReference type="Proteomes" id="UP000001976">
    <property type="component" value="Chromosome"/>
</dbReference>
<dbReference type="GO" id="GO:0016706">
    <property type="term" value="F:2-oxoglutarate-dependent dioxygenase activity"/>
    <property type="evidence" value="ECO:0007669"/>
    <property type="project" value="InterPro"/>
</dbReference>
<dbReference type="GO" id="GO:0046872">
    <property type="term" value="F:metal ion binding"/>
    <property type="evidence" value="ECO:0007669"/>
    <property type="project" value="UniProtKB-KW"/>
</dbReference>
<dbReference type="Gene3D" id="2.60.120.330">
    <property type="entry name" value="B-lactam Antibiotic, Isopenicillin N Synthase, Chain"/>
    <property type="match status" value="1"/>
</dbReference>
<dbReference type="Gene3D" id="1.10.1720.10">
    <property type="entry name" value="L-proline 3-hydroxylase, C-terminal domain"/>
    <property type="match status" value="1"/>
</dbReference>
<dbReference type="InterPro" id="IPR007803">
    <property type="entry name" value="Asp/Arg/Pro-Hydrxlase"/>
</dbReference>
<dbReference type="InterPro" id="IPR027443">
    <property type="entry name" value="IPNS-like_sf"/>
</dbReference>
<dbReference type="InterPro" id="IPR008035">
    <property type="entry name" value="Pro_3_hydrox_C"/>
</dbReference>
<dbReference type="InterPro" id="IPR037037">
    <property type="entry name" value="Pro_3_hydrox_C_sf"/>
</dbReference>
<dbReference type="Pfam" id="PF05118">
    <property type="entry name" value="Asp_Arg_Hydrox"/>
    <property type="match status" value="1"/>
</dbReference>
<dbReference type="Pfam" id="PF05373">
    <property type="entry name" value="Pro_3_hydrox_C"/>
    <property type="match status" value="1"/>
</dbReference>
<dbReference type="SUPFAM" id="SSF51197">
    <property type="entry name" value="Clavaminate synthase-like"/>
    <property type="match status" value="1"/>
</dbReference>
<feature type="chain" id="PRO_0000393425" description="L-proline cis-4-hydroxylase">
    <location>
        <begin position="1"/>
        <end position="280"/>
    </location>
</feature>
<feature type="binding site" evidence="1">
    <location>
        <position position="106"/>
    </location>
    <ligand>
        <name>Fe cation</name>
        <dbReference type="ChEBI" id="CHEBI:24875"/>
    </ligand>
</feature>
<feature type="binding site" evidence="1">
    <location>
        <position position="108"/>
    </location>
    <ligand>
        <name>Fe cation</name>
        <dbReference type="ChEBI" id="CHEBI:24875"/>
    </ligand>
</feature>
<feature type="binding site" evidence="1">
    <location>
        <position position="154"/>
    </location>
    <ligand>
        <name>Fe cation</name>
        <dbReference type="ChEBI" id="CHEBI:24875"/>
    </ligand>
</feature>
<feature type="binding site" evidence="2">
    <location>
        <position position="164"/>
    </location>
    <ligand>
        <name>2-oxoglutarate</name>
        <dbReference type="ChEBI" id="CHEBI:16810"/>
    </ligand>
</feature>
<organism>
    <name type="scientific">Rhizobium meliloti (strain 1021)</name>
    <name type="common">Ensifer meliloti</name>
    <name type="synonym">Sinorhizobium meliloti</name>
    <dbReference type="NCBI Taxonomy" id="266834"/>
    <lineage>
        <taxon>Bacteria</taxon>
        <taxon>Pseudomonadati</taxon>
        <taxon>Pseudomonadota</taxon>
        <taxon>Alphaproteobacteria</taxon>
        <taxon>Hyphomicrobiales</taxon>
        <taxon>Rhizobiaceae</taxon>
        <taxon>Sinorhizobium/Ensifer group</taxon>
        <taxon>Sinorhizobium</taxon>
    </lineage>
</organism>
<proteinExistence type="evidence at protein level"/>
<keyword id="KW-0223">Dioxygenase</keyword>
<keyword id="KW-0408">Iron</keyword>
<keyword id="KW-0479">Metal-binding</keyword>
<keyword id="KW-0560">Oxidoreductase</keyword>
<keyword id="KW-1185">Reference proteome</keyword>
<evidence type="ECO:0000250" key="1"/>
<evidence type="ECO:0000255" key="2"/>
<evidence type="ECO:0000269" key="3">
    <source>
    </source>
</evidence>
<evidence type="ECO:0000305" key="4"/>
<sequence>MSTHFLGKVKFDEARLAEDLSTLEVAEFSSAYSDFACGKWEACVLRNRTGMQEEDIVVSHNAPALATPLSKSLPYLNELVETHFDCSAVRYTRIVRVSENACIIPHSDYLELDETFTRLHLVLDTNSGCANTEEDKIFHMGLGEIWFLDAMLPHSAACFSKTPRLHLMIDFEATAFPESFLRNVEQPVTTRDMVDPRKELTDEVIEGILGFSIIISEANYREIVSILAKLHFFYKADCRSMYDWLKEICKRRGDPALIEKTASLERFFLGHRERGEVMTY</sequence>
<accession>Q92LF6</accession>
<comment type="function">
    <text evidence="3">Dioxygenase that catalyzes the 2-oxoglutarate-dependent selective hydroxylation of free L-proline to cis-4-hydroxy-L-proline (cis-4-Hyp).</text>
</comment>
<comment type="catalytic activity">
    <reaction evidence="3">
        <text>L-proline + 2-oxoglutarate + O2 = cis-4-hydroxy-L-proline + succinate + CO2</text>
        <dbReference type="Rhea" id="RHEA:32127"/>
        <dbReference type="ChEBI" id="CHEBI:15379"/>
        <dbReference type="ChEBI" id="CHEBI:16526"/>
        <dbReference type="ChEBI" id="CHEBI:16810"/>
        <dbReference type="ChEBI" id="CHEBI:30031"/>
        <dbReference type="ChEBI" id="CHEBI:60039"/>
        <dbReference type="ChEBI" id="CHEBI:63727"/>
        <dbReference type="EC" id="1.14.11.56"/>
    </reaction>
</comment>
<comment type="cofactor">
    <cofactor evidence="3">
        <name>Fe(2+)</name>
        <dbReference type="ChEBI" id="CHEBI:29033"/>
    </cofactor>
    <text evidence="3">Binds 1 Fe(2+) ion.</text>
</comment>
<comment type="activity regulation">
    <text evidence="3">Inhibited by metal ions such as Co(2+), Zn(2+), Cu(2+) or Ni(2+). Is also inhibited by EDTA or diethylpyrocarbonate (DEPC) in vitro. Unlike the procollagen-proline cis-3- and trans-4-hydroxylases from mammals, does not necessarily require L-ascorbate for activity although it does increase the activity of the enzyme.</text>
</comment>
<comment type="biophysicochemical properties">
    <kinetics>
        <KM evidence="3">0.54 mM for L-proline</KM>
        <KM evidence="3">0.3 mM for 2-oxoglutarate</KM>
        <text>kcat is 25 sec(-1).</text>
    </kinetics>
    <phDependence>
        <text evidence="3">Optimum pH is 7.0.</text>
    </phDependence>
    <temperatureDependence>
        <text evidence="3">Optimum temperature is 25 degrees Celsius.</text>
    </temperatureDependence>
</comment>
<comment type="biotechnology">
    <text evidence="3">Would be one of the most promising biocatalysts for production of cis-4-hydroxy-L-proline (cis-4-Hyp), a compound which was clinically evaluated as an anticancer drug.</text>
</comment>
<comment type="similarity">
    <text evidence="4">Belongs to the L-proline cis-4-/cis-3-hydroxylase family.</text>
</comment>
<gene>
    <name type="ordered locus">R03107</name>
    <name type="ORF">SMc03253</name>
</gene>